<name>UBP10_CHICK</name>
<organism>
    <name type="scientific">Gallus gallus</name>
    <name type="common">Chicken</name>
    <dbReference type="NCBI Taxonomy" id="9031"/>
    <lineage>
        <taxon>Eukaryota</taxon>
        <taxon>Metazoa</taxon>
        <taxon>Chordata</taxon>
        <taxon>Craniata</taxon>
        <taxon>Vertebrata</taxon>
        <taxon>Euteleostomi</taxon>
        <taxon>Archelosauria</taxon>
        <taxon>Archosauria</taxon>
        <taxon>Dinosauria</taxon>
        <taxon>Saurischia</taxon>
        <taxon>Theropoda</taxon>
        <taxon>Coelurosauria</taxon>
        <taxon>Aves</taxon>
        <taxon>Neognathae</taxon>
        <taxon>Galloanserae</taxon>
        <taxon>Galliformes</taxon>
        <taxon>Phasianidae</taxon>
        <taxon>Phasianinae</taxon>
        <taxon>Gallus</taxon>
    </lineage>
</organism>
<evidence type="ECO:0000250" key="1">
    <source>
        <dbReference type="UniProtKB" id="Q14694"/>
    </source>
</evidence>
<evidence type="ECO:0000255" key="2">
    <source>
        <dbReference type="PROSITE-ProRule" id="PRU10092"/>
    </source>
</evidence>
<evidence type="ECO:0000256" key="3">
    <source>
        <dbReference type="SAM" id="MobiDB-lite"/>
    </source>
</evidence>
<evidence type="ECO:0000305" key="4"/>
<protein>
    <recommendedName>
        <fullName>Ubiquitin carboxyl-terminal hydrolase 10</fullName>
        <ecNumber evidence="1">3.4.19.12</ecNumber>
    </recommendedName>
    <alternativeName>
        <fullName>Deubiquitinating enzyme 10</fullName>
    </alternativeName>
    <alternativeName>
        <fullName>Ubiquitin thioesterase 10</fullName>
    </alternativeName>
    <alternativeName>
        <fullName>Ubiquitin-specific-processing protease 10</fullName>
    </alternativeName>
</protein>
<keyword id="KW-0072">Autophagy</keyword>
<keyword id="KW-0963">Cytoplasm</keyword>
<keyword id="KW-0227">DNA damage</keyword>
<keyword id="KW-0234">DNA repair</keyword>
<keyword id="KW-0378">Hydrolase</keyword>
<keyword id="KW-0539">Nucleus</keyword>
<keyword id="KW-0645">Protease</keyword>
<keyword id="KW-1185">Reference proteome</keyword>
<keyword id="KW-0788">Thiol protease</keyword>
<keyword id="KW-0833">Ubl conjugation pathway</keyword>
<accession>Q5ZJN4</accession>
<feature type="chain" id="PRO_0000393001" description="Ubiquitin carboxyl-terminal hydrolase 10">
    <location>
        <begin position="1"/>
        <end position="785"/>
    </location>
</feature>
<feature type="domain" description="USP">
    <location>
        <begin position="401"/>
        <end position="782"/>
    </location>
</feature>
<feature type="region of interest" description="Disordered" evidence="3">
    <location>
        <begin position="113"/>
        <end position="145"/>
    </location>
</feature>
<feature type="region of interest" description="Disordered" evidence="3">
    <location>
        <begin position="262"/>
        <end position="314"/>
    </location>
</feature>
<feature type="region of interest" description="Disordered" evidence="3">
    <location>
        <begin position="537"/>
        <end position="581"/>
    </location>
</feature>
<feature type="compositionally biased region" description="Polar residues" evidence="3">
    <location>
        <begin position="113"/>
        <end position="122"/>
    </location>
</feature>
<feature type="compositionally biased region" description="Polar residues" evidence="3">
    <location>
        <begin position="262"/>
        <end position="277"/>
    </location>
</feature>
<feature type="compositionally biased region" description="Basic and acidic residues" evidence="3">
    <location>
        <begin position="290"/>
        <end position="304"/>
    </location>
</feature>
<feature type="compositionally biased region" description="Low complexity" evidence="3">
    <location>
        <begin position="305"/>
        <end position="314"/>
    </location>
</feature>
<feature type="compositionally biased region" description="Acidic residues" evidence="3">
    <location>
        <begin position="552"/>
        <end position="568"/>
    </location>
</feature>
<feature type="active site" description="Nucleophile" evidence="2">
    <location>
        <position position="410"/>
    </location>
</feature>
<feature type="active site" description="Proton acceptor" evidence="2">
    <location>
        <position position="736"/>
    </location>
</feature>
<gene>
    <name type="primary">USP10</name>
    <name type="ORF">RCJMB04_16o18</name>
</gene>
<reference key="1">
    <citation type="journal article" date="2005" name="Genome Biol.">
        <title>Full-length cDNAs from chicken bursal lymphocytes to facilitate gene function analysis.</title>
        <authorList>
            <person name="Caldwell R.B."/>
            <person name="Kierzek A.M."/>
            <person name="Arakawa H."/>
            <person name="Bezzubov Y."/>
            <person name="Zaim J."/>
            <person name="Fiedler P."/>
            <person name="Kutter S."/>
            <person name="Blagodatski A."/>
            <person name="Kostovska D."/>
            <person name="Koter M."/>
            <person name="Plachy J."/>
            <person name="Carninci P."/>
            <person name="Hayashizaki Y."/>
            <person name="Buerstedde J.-M."/>
        </authorList>
    </citation>
    <scope>NUCLEOTIDE SEQUENCE [LARGE SCALE MRNA]</scope>
    <source>
        <strain>CB</strain>
        <tissue>Bursa of Fabricius</tissue>
    </source>
</reference>
<proteinExistence type="evidence at transcript level"/>
<sequence length="785" mass="86556">MAVNGAQYIFGEFSPDEFNQFFVTPRCSVELPPYNETVSCGIKSTNEEYQRIEFGVNEVIETESSVLNNTDYSISSTLNPQAPEFILSCAPAQKTPDETNYNSIDCQFSDPTLTLDSGSNAENDGLSGGLGQRERKKKKKRPPGYYSYLEDVSDGVAPTEALVNGHANSSGLNSIGTEDTELTGDIPSLATPRTCNSPDNSVDFVHEAVSDDSVSSALDNTRTAGQPEVCRVTNSEQFCIPSETGRDSPLRTAVVQPYAGTDTTESLGVTNGQTLESSGEDTAANGVELHTVESTDSDQAKPEEASPTTEATATVAGSVPVNQPAKSWASLFHNSKPSASTSVVYVETKYTPPATSTLVPEKQVEVKEGPVPVSEDPVAIKIAELLENVKLVHKPVSLQPRGLINKGNWCYINATLQALVACPPMYHLMKSIPMYSKSQRPCTSTPMIDSFVRLMNEFTNMPVPPKAKQALGDKIVRDIRPGAAFEPTYIYRLLTVIKSSLSEKGRQEDAEEYLGFILNGLHEEMLTLKKLLSPHNEKLSVSNGPEVQTVREEEEQDEQGEGSEDEWEQVGPRNKSSVTRQADFVQTPITDIFGGHIRSVVYQQSSKESATLQPFFTLQLDIQSDKIRTVQDALESLVARESVQGYTTKTKQEVEISRRVTLEELPPVLVLHLKRFVYEKTGGCQKLIKNIEYPVDLEISKELLSPGVKSKIFKGQRTYRLFAVVYHHGNSATGDHYTTDVFQIGLNGWLRIDDQAVKVINQYQVVKPSAERTAYLLYYRRVDLL</sequence>
<comment type="function">
    <text evidence="1">Hydrolase that can remove conjugated ubiquitin from target proteins such as p53/TP53, RPS2/us5, RPS3/us3, RPS10/eS10, BECN1, SNX3 and CFTR. Acts as an essential regulator of p53/TP53 stability: in unstressed cells, specifically deubiquitinates p53/TP53 in the cytoplasm, leading to counteracts MDM2 action and stabilize p53/TP53. Following DNA damage, translocates to the nucleus and deubiquitinates p53/TP53, leading to regulate the p53/TP53-dependent DNA damage response. Component of a regulatory loop that controls autophagy and p53/TP53 levels. Plays a key role in 40S ribosome subunit recycling when a ribosome has stalled during translation: acts both by inhibiting formation of stress granules, which store stalled translation pre-initiation complexes, and mediating deubiquitination of 40S ribosome subunits. Deubiquitinates CFTR in early endosomes, enhancing its endocytic recycling.</text>
</comment>
<comment type="catalytic activity">
    <reaction evidence="1">
        <text>Thiol-dependent hydrolysis of ester, thioester, amide, peptide and isopeptide bonds formed by the C-terminal Gly of ubiquitin (a 76-residue protein attached to proteins as an intracellular targeting signal).</text>
        <dbReference type="EC" id="3.4.19.12"/>
    </reaction>
</comment>
<comment type="subcellular location">
    <subcellularLocation>
        <location evidence="1">Cytoplasm</location>
    </subcellularLocation>
    <subcellularLocation>
        <location evidence="1">Nucleus</location>
    </subcellularLocation>
</comment>
<comment type="similarity">
    <text evidence="4">Belongs to the peptidase C19 family. USP10 subfamily.</text>
</comment>
<dbReference type="EC" id="3.4.19.12" evidence="1"/>
<dbReference type="EMBL" id="AJ720400">
    <property type="protein sequence ID" value="CAG32059.1"/>
    <property type="molecule type" value="mRNA"/>
</dbReference>
<dbReference type="RefSeq" id="NP_001006130.1">
    <property type="nucleotide sequence ID" value="NM_001006130.1"/>
</dbReference>
<dbReference type="SMR" id="Q5ZJN4"/>
<dbReference type="BioGRID" id="677409">
    <property type="interactions" value="1"/>
</dbReference>
<dbReference type="FunCoup" id="Q5ZJN4">
    <property type="interactions" value="1122"/>
</dbReference>
<dbReference type="STRING" id="9031.ENSGALP00000056499"/>
<dbReference type="MEROPS" id="C19.018"/>
<dbReference type="GlyGen" id="Q5ZJN4">
    <property type="glycosylation" value="2 sites"/>
</dbReference>
<dbReference type="PaxDb" id="9031-ENSGALP00000009085"/>
<dbReference type="GeneID" id="415817"/>
<dbReference type="KEGG" id="gga:415817"/>
<dbReference type="CTD" id="9100"/>
<dbReference type="VEuPathDB" id="HostDB:geneid_415817"/>
<dbReference type="eggNOG" id="KOG1871">
    <property type="taxonomic scope" value="Eukaryota"/>
</dbReference>
<dbReference type="InParanoid" id="Q5ZJN4"/>
<dbReference type="OrthoDB" id="429671at2759"/>
<dbReference type="PhylomeDB" id="Q5ZJN4"/>
<dbReference type="PRO" id="PR:Q5ZJN4"/>
<dbReference type="Proteomes" id="UP000000539">
    <property type="component" value="Unassembled WGS sequence"/>
</dbReference>
<dbReference type="GO" id="GO:0005737">
    <property type="term" value="C:cytoplasm"/>
    <property type="evidence" value="ECO:0000250"/>
    <property type="project" value="UniProtKB"/>
</dbReference>
<dbReference type="GO" id="GO:0005829">
    <property type="term" value="C:cytosol"/>
    <property type="evidence" value="ECO:0000318"/>
    <property type="project" value="GO_Central"/>
</dbReference>
<dbReference type="GO" id="GO:0005769">
    <property type="term" value="C:early endosome"/>
    <property type="evidence" value="ECO:0000250"/>
    <property type="project" value="UniProtKB"/>
</dbReference>
<dbReference type="GO" id="GO:0005634">
    <property type="term" value="C:nucleus"/>
    <property type="evidence" value="ECO:0000250"/>
    <property type="project" value="UniProtKB"/>
</dbReference>
<dbReference type="GO" id="GO:0004843">
    <property type="term" value="F:cysteine-type deubiquitinase activity"/>
    <property type="evidence" value="ECO:0000250"/>
    <property type="project" value="UniProtKB"/>
</dbReference>
<dbReference type="GO" id="GO:0004197">
    <property type="term" value="F:cysteine-type endopeptidase activity"/>
    <property type="evidence" value="ECO:0000250"/>
    <property type="project" value="UniProtKB"/>
</dbReference>
<dbReference type="GO" id="GO:0002039">
    <property type="term" value="F:p53 binding"/>
    <property type="evidence" value="ECO:0000250"/>
    <property type="project" value="UniProtKB"/>
</dbReference>
<dbReference type="GO" id="GO:0044325">
    <property type="term" value="F:transmembrane transporter binding"/>
    <property type="evidence" value="ECO:0000250"/>
    <property type="project" value="UniProtKB"/>
</dbReference>
<dbReference type="GO" id="GO:0006914">
    <property type="term" value="P:autophagy"/>
    <property type="evidence" value="ECO:0007669"/>
    <property type="project" value="UniProtKB-KW"/>
</dbReference>
<dbReference type="GO" id="GO:0071347">
    <property type="term" value="P:cellular response to interleukin-1"/>
    <property type="evidence" value="ECO:0000250"/>
    <property type="project" value="UniProtKB"/>
</dbReference>
<dbReference type="GO" id="GO:0006974">
    <property type="term" value="P:DNA damage response"/>
    <property type="evidence" value="ECO:0000250"/>
    <property type="project" value="UniProtKB"/>
</dbReference>
<dbReference type="GO" id="GO:0030330">
    <property type="term" value="P:DNA damage response, signal transduction by p53 class mediator"/>
    <property type="evidence" value="ECO:0000250"/>
    <property type="project" value="UniProtKB"/>
</dbReference>
<dbReference type="GO" id="GO:0006281">
    <property type="term" value="P:DNA repair"/>
    <property type="evidence" value="ECO:0007669"/>
    <property type="project" value="UniProtKB-KW"/>
</dbReference>
<dbReference type="GO" id="GO:0043124">
    <property type="term" value="P:negative regulation of canonical NF-kappaB signal transduction"/>
    <property type="evidence" value="ECO:0000250"/>
    <property type="project" value="UniProtKB"/>
</dbReference>
<dbReference type="GO" id="GO:0062030">
    <property type="term" value="P:negative regulation of stress granule assembly"/>
    <property type="evidence" value="ECO:0000250"/>
    <property type="project" value="UniProtKB"/>
</dbReference>
<dbReference type="GO" id="GO:0016579">
    <property type="term" value="P:protein deubiquitination"/>
    <property type="evidence" value="ECO:0000250"/>
    <property type="project" value="UniProtKB"/>
</dbReference>
<dbReference type="GO" id="GO:0006508">
    <property type="term" value="P:proteolysis"/>
    <property type="evidence" value="ECO:0007669"/>
    <property type="project" value="UniProtKB-KW"/>
</dbReference>
<dbReference type="GO" id="GO:0010506">
    <property type="term" value="P:regulation of autophagy"/>
    <property type="evidence" value="ECO:0000250"/>
    <property type="project" value="UniProtKB"/>
</dbReference>
<dbReference type="GO" id="GO:0031647">
    <property type="term" value="P:regulation of protein stability"/>
    <property type="evidence" value="ECO:0000318"/>
    <property type="project" value="GO_Central"/>
</dbReference>
<dbReference type="GO" id="GO:0072344">
    <property type="term" value="P:rescue of stalled ribosome"/>
    <property type="evidence" value="ECO:0000250"/>
    <property type="project" value="UniProtKB"/>
</dbReference>
<dbReference type="CDD" id="cd02257">
    <property type="entry name" value="Peptidase_C19"/>
    <property type="match status" value="1"/>
</dbReference>
<dbReference type="FunFam" id="3.90.70.10:FF:000015">
    <property type="entry name" value="Ubiquitin specific peptidase 10"/>
    <property type="match status" value="1"/>
</dbReference>
<dbReference type="Gene3D" id="3.90.70.10">
    <property type="entry name" value="Cysteine proteinases"/>
    <property type="match status" value="1"/>
</dbReference>
<dbReference type="InterPro" id="IPR009818">
    <property type="entry name" value="PAM2_motif"/>
</dbReference>
<dbReference type="InterPro" id="IPR038765">
    <property type="entry name" value="Papain-like_cys_pep_sf"/>
</dbReference>
<dbReference type="InterPro" id="IPR050164">
    <property type="entry name" value="Peptidase_C19"/>
</dbReference>
<dbReference type="InterPro" id="IPR001394">
    <property type="entry name" value="Peptidase_C19_UCH"/>
</dbReference>
<dbReference type="InterPro" id="IPR018200">
    <property type="entry name" value="USP_CS"/>
</dbReference>
<dbReference type="InterPro" id="IPR028889">
    <property type="entry name" value="USP_dom"/>
</dbReference>
<dbReference type="PANTHER" id="PTHR24006">
    <property type="entry name" value="UBIQUITIN CARBOXYL-TERMINAL HYDROLASE"/>
    <property type="match status" value="1"/>
</dbReference>
<dbReference type="PANTHER" id="PTHR24006:SF687">
    <property type="entry name" value="UBIQUITIN CARBOXYL-TERMINAL HYDROLASE 10"/>
    <property type="match status" value="1"/>
</dbReference>
<dbReference type="Pfam" id="PF07145">
    <property type="entry name" value="PAM2"/>
    <property type="match status" value="1"/>
</dbReference>
<dbReference type="Pfam" id="PF00443">
    <property type="entry name" value="UCH"/>
    <property type="match status" value="1"/>
</dbReference>
<dbReference type="SUPFAM" id="SSF54001">
    <property type="entry name" value="Cysteine proteinases"/>
    <property type="match status" value="1"/>
</dbReference>
<dbReference type="PROSITE" id="PS00972">
    <property type="entry name" value="USP_1"/>
    <property type="match status" value="1"/>
</dbReference>
<dbReference type="PROSITE" id="PS50235">
    <property type="entry name" value="USP_3"/>
    <property type="match status" value="1"/>
</dbReference>